<keyword id="KW-0150">Chloroplast</keyword>
<keyword id="KW-0472">Membrane</keyword>
<keyword id="KW-0602">Photosynthesis</keyword>
<keyword id="KW-0604">Photosystem II</keyword>
<keyword id="KW-0934">Plastid</keyword>
<keyword id="KW-0674">Reaction center</keyword>
<keyword id="KW-0793">Thylakoid</keyword>
<keyword id="KW-0812">Transmembrane</keyword>
<keyword id="KW-1133">Transmembrane helix</keyword>
<accession>P62107</accession>
<accession>P09970</accession>
<protein>
    <recommendedName>
        <fullName evidence="1">Photosystem II reaction center protein I</fullName>
        <shortName evidence="1">PSII-I</shortName>
    </recommendedName>
    <alternativeName>
        <fullName evidence="1">PSII 4.8 kDa protein</fullName>
    </alternativeName>
</protein>
<reference key="1">
    <citation type="journal article" date="1989" name="Nucleic Acids Res.">
        <title>Nucleotide sequence of rye chloroplast DNA fragment, comprising psbD, psbC and trnS genes.</title>
        <authorList>
            <person name="Bukharov A.A."/>
            <person name="Kolosov V.L."/>
            <person name="Klezovich O.N."/>
            <person name="Zolotarev A.S."/>
        </authorList>
    </citation>
    <scope>NUCLEOTIDE SEQUENCE [GENOMIC DNA]</scope>
</reference>
<reference key="2">
    <citation type="journal article" date="1991" name="Bioorg. Khim.">
        <title>Photosystem II of rye. Nucleotide sequence of psbD, psbI genes encoding reaction center proteins.</title>
        <authorList>
            <person name="Kolosov V.L."/>
            <person name="Bukharov A.A."/>
            <person name="Zolotarev A.S."/>
        </authorList>
    </citation>
    <scope>NUCLEOTIDE SEQUENCE [GENOMIC DNA]</scope>
</reference>
<organism>
    <name type="scientific">Secale cereale</name>
    <name type="common">Rye</name>
    <dbReference type="NCBI Taxonomy" id="4550"/>
    <lineage>
        <taxon>Eukaryota</taxon>
        <taxon>Viridiplantae</taxon>
        <taxon>Streptophyta</taxon>
        <taxon>Embryophyta</taxon>
        <taxon>Tracheophyta</taxon>
        <taxon>Spermatophyta</taxon>
        <taxon>Magnoliopsida</taxon>
        <taxon>Liliopsida</taxon>
        <taxon>Poales</taxon>
        <taxon>Poaceae</taxon>
        <taxon>BOP clade</taxon>
        <taxon>Pooideae</taxon>
        <taxon>Triticodae</taxon>
        <taxon>Triticeae</taxon>
        <taxon>Hordeinae</taxon>
        <taxon>Secale</taxon>
    </lineage>
</organism>
<name>PSBI_SECCE</name>
<evidence type="ECO:0000255" key="1">
    <source>
        <dbReference type="HAMAP-Rule" id="MF_01316"/>
    </source>
</evidence>
<comment type="function">
    <text evidence="1">One of the components of the core complex of photosystem II (PSII), required for its stability and/or assembly. PSII is a light-driven water:plastoquinone oxidoreductase that uses light energy to abstract electrons from H(2)O, generating O(2) and a proton gradient subsequently used for ATP formation. It consists of a core antenna complex that captures photons, and an electron transfer chain that converts photonic excitation into a charge separation.</text>
</comment>
<comment type="subunit">
    <text evidence="1">PSII is composed of 1 copy each of membrane proteins PsbA, PsbB, PsbC, PsbD, PsbE, PsbF, PsbH, PsbI, PsbJ, PsbK, PsbL, PsbM, PsbT, PsbX, PsbY, PsbZ, Psb30/Ycf12, at least 3 peripheral proteins of the oxygen-evolving complex and a large number of cofactors. It forms dimeric complexes.</text>
</comment>
<comment type="subcellular location">
    <subcellularLocation>
        <location evidence="1">Plastid</location>
        <location evidence="1">Chloroplast thylakoid membrane</location>
        <topology evidence="1">Single-pass membrane protein</topology>
    </subcellularLocation>
</comment>
<comment type="similarity">
    <text evidence="1">Belongs to the PsbI family.</text>
</comment>
<gene>
    <name evidence="1" type="primary">psbI</name>
</gene>
<feature type="chain" id="PRO_0000219653" description="Photosystem II reaction center protein I">
    <location>
        <begin position="1"/>
        <end position="36"/>
    </location>
</feature>
<feature type="transmembrane region" description="Helical" evidence="1">
    <location>
        <begin position="4"/>
        <end position="24"/>
    </location>
</feature>
<geneLocation type="chloroplast"/>
<dbReference type="EMBL" id="X61674">
    <property type="protein sequence ID" value="CAA43849.1"/>
    <property type="molecule type" value="Genomic_DNA"/>
</dbReference>
<dbReference type="PIR" id="JN0315">
    <property type="entry name" value="JN0315"/>
</dbReference>
<dbReference type="RefSeq" id="YP_008239156.1">
    <property type="nucleotide sequence ID" value="NC_021761.1"/>
</dbReference>
<dbReference type="SMR" id="P62107"/>
<dbReference type="GeneID" id="16792744"/>
<dbReference type="GO" id="GO:0009535">
    <property type="term" value="C:chloroplast thylakoid membrane"/>
    <property type="evidence" value="ECO:0007669"/>
    <property type="project" value="UniProtKB-SubCell"/>
</dbReference>
<dbReference type="GO" id="GO:0009539">
    <property type="term" value="C:photosystem II reaction center"/>
    <property type="evidence" value="ECO:0007669"/>
    <property type="project" value="InterPro"/>
</dbReference>
<dbReference type="GO" id="GO:0015979">
    <property type="term" value="P:photosynthesis"/>
    <property type="evidence" value="ECO:0007669"/>
    <property type="project" value="UniProtKB-UniRule"/>
</dbReference>
<dbReference type="HAMAP" id="MF_01316">
    <property type="entry name" value="PSII_PsbI"/>
    <property type="match status" value="1"/>
</dbReference>
<dbReference type="InterPro" id="IPR003686">
    <property type="entry name" value="PSII_PsbI"/>
</dbReference>
<dbReference type="InterPro" id="IPR037271">
    <property type="entry name" value="PSII_PsbI_sf"/>
</dbReference>
<dbReference type="NCBIfam" id="NF002735">
    <property type="entry name" value="PRK02655.1"/>
    <property type="match status" value="1"/>
</dbReference>
<dbReference type="PANTHER" id="PTHR35772">
    <property type="entry name" value="PHOTOSYSTEM II REACTION CENTER PROTEIN I"/>
    <property type="match status" value="1"/>
</dbReference>
<dbReference type="PANTHER" id="PTHR35772:SF1">
    <property type="entry name" value="PHOTOSYSTEM II REACTION CENTER PROTEIN I"/>
    <property type="match status" value="1"/>
</dbReference>
<dbReference type="Pfam" id="PF02532">
    <property type="entry name" value="PsbI"/>
    <property type="match status" value="1"/>
</dbReference>
<dbReference type="SUPFAM" id="SSF161041">
    <property type="entry name" value="Photosystem II reaction center protein I, PsbI"/>
    <property type="match status" value="1"/>
</dbReference>
<proteinExistence type="inferred from homology"/>
<sequence length="36" mass="4168">MLTLKLFVYTVVIFFVSLFIFGFLSNDPGRNPGREE</sequence>